<protein>
    <recommendedName>
        <fullName evidence="4">U18-myrmicitoxin-Mri1a</fullName>
        <shortName evidence="4">U18-MYRTX-Mri1a</shortName>
    </recommendedName>
</protein>
<organism evidence="6">
    <name type="scientific">Manica rubida</name>
    <name type="common">European giant red ant</name>
    <dbReference type="NCBI Taxonomy" id="219785"/>
    <lineage>
        <taxon>Eukaryota</taxon>
        <taxon>Metazoa</taxon>
        <taxon>Ecdysozoa</taxon>
        <taxon>Arthropoda</taxon>
        <taxon>Hexapoda</taxon>
        <taxon>Insecta</taxon>
        <taxon>Pterygota</taxon>
        <taxon>Neoptera</taxon>
        <taxon>Endopterygota</taxon>
        <taxon>Hymenoptera</taxon>
        <taxon>Apocrita</taxon>
        <taxon>Aculeata</taxon>
        <taxon>Formicoidea</taxon>
        <taxon>Formicidae</taxon>
        <taxon>Myrmicinae</taxon>
        <taxon>Manica</taxon>
    </lineage>
</organism>
<evidence type="ECO:0000255" key="1"/>
<evidence type="ECO:0000255" key="2">
    <source>
        <dbReference type="PROSITE-ProRule" id="PRU00076"/>
    </source>
</evidence>
<evidence type="ECO:0000269" key="3">
    <source>
    </source>
</evidence>
<evidence type="ECO:0000303" key="4">
    <source>
    </source>
</evidence>
<evidence type="ECO:0000305" key="5"/>
<evidence type="ECO:0000312" key="6">
    <source>
        <dbReference type="EMBL" id="QIQ51456.1"/>
    </source>
</evidence>
<sequence>MKNNYNRINTFIVYLMVTFSLISIISITECTPNHDPCPPQYAEALCLNGGTCFSVTIMGSDNYNCICAPGFRGWRCQEKDLDHPVNQ</sequence>
<proteinExistence type="evidence at protein level"/>
<feature type="signal peptide" evidence="1">
    <location>
        <begin position="1"/>
        <end position="32"/>
    </location>
</feature>
<feature type="peptide" id="PRO_0000453058" description="U18-myrmicitoxin-Mri1a" evidence="3">
    <location>
        <begin position="33"/>
        <end position="87"/>
    </location>
</feature>
<feature type="domain" description="EGF-like" evidence="2">
    <location>
        <begin position="33"/>
        <end position="77"/>
    </location>
</feature>
<feature type="disulfide bond" evidence="2">
    <location>
        <begin position="37"/>
        <end position="52"/>
    </location>
</feature>
<feature type="disulfide bond" evidence="2">
    <location>
        <begin position="46"/>
        <end position="65"/>
    </location>
</feature>
<feature type="disulfide bond" evidence="2">
    <location>
        <begin position="67"/>
        <end position="76"/>
    </location>
</feature>
<keyword id="KW-0903">Direct protein sequencing</keyword>
<keyword id="KW-1015">Disulfide bond</keyword>
<keyword id="KW-0245">EGF-like domain</keyword>
<keyword id="KW-0325">Glycoprotein</keyword>
<keyword id="KW-0964">Secreted</keyword>
<keyword id="KW-0732">Signal</keyword>
<comment type="subcellular location">
    <subcellularLocation>
        <location evidence="3">Secreted</location>
    </subcellularLocation>
</comment>
<comment type="tissue specificity">
    <text evidence="3">Expressed by the venom gland.</text>
</comment>
<comment type="PTM">
    <text evidence="3">O-glycosylated.</text>
</comment>
<comment type="mass spectrometry"/>
<comment type="similarity">
    <text evidence="5">Belongs to the EGF domain peptide family.</text>
</comment>
<name>TX18A_MANRB</name>
<dbReference type="EMBL" id="MN765046">
    <property type="protein sequence ID" value="QIQ51456.1"/>
    <property type="molecule type" value="mRNA"/>
</dbReference>
<dbReference type="SMR" id="A0A6G9KJM3"/>
<dbReference type="GO" id="GO:0005576">
    <property type="term" value="C:extracellular region"/>
    <property type="evidence" value="ECO:0000314"/>
    <property type="project" value="UniProtKB"/>
</dbReference>
<dbReference type="GO" id="GO:0005154">
    <property type="term" value="F:epidermal growth factor receptor binding"/>
    <property type="evidence" value="ECO:0007669"/>
    <property type="project" value="InterPro"/>
</dbReference>
<dbReference type="GO" id="GO:0048018">
    <property type="term" value="F:receptor ligand activity"/>
    <property type="evidence" value="ECO:0007669"/>
    <property type="project" value="InterPro"/>
</dbReference>
<dbReference type="GO" id="GO:0007173">
    <property type="term" value="P:epidermal growth factor receptor signaling pathway"/>
    <property type="evidence" value="ECO:0007669"/>
    <property type="project" value="InterPro"/>
</dbReference>
<dbReference type="Gene3D" id="2.10.25.10">
    <property type="entry name" value="Laminin"/>
    <property type="match status" value="1"/>
</dbReference>
<dbReference type="InterPro" id="IPR000742">
    <property type="entry name" value="EGF-like_dom"/>
</dbReference>
<dbReference type="InterPro" id="IPR043403">
    <property type="entry name" value="Gurken/Spitz"/>
</dbReference>
<dbReference type="PANTHER" id="PTHR12332">
    <property type="entry name" value="KEREN-RELATED"/>
    <property type="match status" value="1"/>
</dbReference>
<dbReference type="PANTHER" id="PTHR12332:SF1">
    <property type="entry name" value="KEREN-RELATED"/>
    <property type="match status" value="1"/>
</dbReference>
<dbReference type="Pfam" id="PF00008">
    <property type="entry name" value="EGF"/>
    <property type="match status" value="1"/>
</dbReference>
<dbReference type="SMART" id="SM00181">
    <property type="entry name" value="EGF"/>
    <property type="match status" value="1"/>
</dbReference>
<dbReference type="SUPFAM" id="SSF57196">
    <property type="entry name" value="EGF/Laminin"/>
    <property type="match status" value="1"/>
</dbReference>
<dbReference type="PROSITE" id="PS00022">
    <property type="entry name" value="EGF_1"/>
    <property type="match status" value="1"/>
</dbReference>
<dbReference type="PROSITE" id="PS01186">
    <property type="entry name" value="EGF_2"/>
    <property type="match status" value="1"/>
</dbReference>
<dbReference type="PROSITE" id="PS50026">
    <property type="entry name" value="EGF_3"/>
    <property type="match status" value="1"/>
</dbReference>
<accession>A0A6G9KJM3</accession>
<reference evidence="6" key="1">
    <citation type="journal article" date="2020" name="J. Proteome Res.">
        <title>Venom Peptide Repertoire of the European Myrmicine Ant Manica rubida: Identification of Insecticidal Toxins.</title>
        <authorList>
            <person name="Touchard A."/>
            <person name="Aili S.R."/>
            <person name="Tene N."/>
            <person name="Barasse V."/>
            <person name="Klopp C."/>
            <person name="Dejean A."/>
            <person name="Kini R.M."/>
            <person name="Mrinalini X."/>
            <person name="Coquet L."/>
            <person name="Jouenne T."/>
            <person name="Lefranc B."/>
            <person name="Leprince J."/>
            <person name="Escoubas P."/>
            <person name="Nicholson G.M."/>
            <person name="Treilhou M."/>
            <person name="Bonnafe E."/>
        </authorList>
    </citation>
    <scope>NUCLEOTIDE SEQUENCE [MRNA]</scope>
    <scope>PROTEIN SEQUENCE OF 33-50</scope>
    <scope>FUNCTION</scope>
    <scope>SUBCELLULAR LOCATION</scope>
    <scope>TISSUE SPECIFICITY</scope>
    <scope>GLYCOSYLATION</scope>
    <scope>MASS SPECTROMETRY</scope>
    <source>
        <tissue evidence="6">Venom gland</tissue>
    </source>
</reference>